<accession>Q9ZVP5</accession>
<protein>
    <recommendedName>
        <fullName evidence="8">Mitogen-activated protein kinase kinase kinase 18</fullName>
        <ecNumber evidence="2 3 5">2.7.11.25</ecNumber>
    </recommendedName>
</protein>
<comment type="function">
    <text evidence="3 4 5">Component of the abscisic acid (ABA) signaling pathway that acts as ABA signal transducer in the context of abiotic stresses (PubMed:25680457, PubMed:25720833, PubMed:26443375). Triggers MPK1, MPK2, MPK7 and MPK14 activation in a MKK3-dependent manner and MPK6 activation in a MKK3-independent manner. Mediates the ABA-dependent activation of the MKK3-MPK7 module (PubMed:25720833). Positive regulator of ABA responses leading to the induction of gene expression (e.g. RD29B and RAB18) and involved in various responses including stomatal development, stomatal movement, inhibition of germination and root growth (PubMed:26443375). Promotes leaf senescence (PubMed:25680457).</text>
</comment>
<comment type="catalytic activity">
    <reaction evidence="2 3 5">
        <text>L-seryl-[protein] + ATP = O-phospho-L-seryl-[protein] + ADP + H(+)</text>
        <dbReference type="Rhea" id="RHEA:17989"/>
        <dbReference type="Rhea" id="RHEA-COMP:9863"/>
        <dbReference type="Rhea" id="RHEA-COMP:11604"/>
        <dbReference type="ChEBI" id="CHEBI:15378"/>
        <dbReference type="ChEBI" id="CHEBI:29999"/>
        <dbReference type="ChEBI" id="CHEBI:30616"/>
        <dbReference type="ChEBI" id="CHEBI:83421"/>
        <dbReference type="ChEBI" id="CHEBI:456216"/>
        <dbReference type="EC" id="2.7.11.25"/>
    </reaction>
</comment>
<comment type="catalytic activity">
    <reaction evidence="2 3 5">
        <text>L-threonyl-[protein] + ATP = O-phospho-L-threonyl-[protein] + ADP + H(+)</text>
        <dbReference type="Rhea" id="RHEA:46608"/>
        <dbReference type="Rhea" id="RHEA-COMP:11060"/>
        <dbReference type="Rhea" id="RHEA-COMP:11605"/>
        <dbReference type="ChEBI" id="CHEBI:15378"/>
        <dbReference type="ChEBI" id="CHEBI:30013"/>
        <dbReference type="ChEBI" id="CHEBI:30616"/>
        <dbReference type="ChEBI" id="CHEBI:61977"/>
        <dbReference type="ChEBI" id="CHEBI:456216"/>
        <dbReference type="EC" id="2.7.11.25"/>
    </reaction>
</comment>
<comment type="activity regulation">
    <text evidence="3 5">Kinase activity is activated by abscisic acid (ABA) (PubMed:25680457, PubMed:26443375). Inhibited by ABI1. Activated by SRK2E (PubMed:26443375).</text>
</comment>
<comment type="subunit">
    <text evidence="3 4 5 6">Interacts with ABI1 (PubMed:26443375). Binds to MKK3 (PubMed:25680457, PubMed:25720833). Associates with SRK2E within the nucleus (PubMed:26852793).</text>
</comment>
<comment type="subcellular location">
    <subcellularLocation>
        <location evidence="5 6">Nucleus</location>
    </subcellularLocation>
</comment>
<comment type="tissue specificity">
    <text evidence="5">Expressed in roots, leaves and flowers.</text>
</comment>
<comment type="developmental stage">
    <text evidence="5">In developing flowers, observed in sepals, anther filaments, ovaries and meristem tissues. Also expressed in root meristem tissues and in areas of lateral root formation. In leaves, detected in guard cells and trichomes.</text>
</comment>
<comment type="induction">
    <text evidence="4 5">Strongly induced by abscisic acid (ABA) in the flowers, leaves and root tissues (PubMed:25720833, PubMed:26443375). Accumulates in response to osmotic stresses (e.g. mannitol and NaCl) (PubMed:25720833).</text>
</comment>
<comment type="PTM">
    <text evidence="3">Autophosphorylated.</text>
</comment>
<comment type="PTM">
    <text evidence="5">Unstable protein degraded by the proteasome pathway; this degradation is promoted by ABI1, but blocked by ABA.</text>
</comment>
<comment type="disruption phenotype">
    <text evidence="4 5">More vigorous root growth, decreased abaxial stomatal index and increased stomatal aperture. Reduced induction of RD29B and RAB18 expression in response to treatment with abscisic acid (ABA) (PubMed:26443375). In the double mutant map3k17 map3k18, impaired MPK7 activation mediated by ABA (PubMed:25720833).</text>
</comment>
<comment type="similarity">
    <text evidence="2">Belongs to the protein kinase superfamily. Ser/Thr protein kinase family.</text>
</comment>
<keyword id="KW-0938">Abscisic acid signaling pathway</keyword>
<keyword id="KW-0067">ATP-binding</keyword>
<keyword id="KW-0418">Kinase</keyword>
<keyword id="KW-0547">Nucleotide-binding</keyword>
<keyword id="KW-0539">Nucleus</keyword>
<keyword id="KW-0597">Phosphoprotein</keyword>
<keyword id="KW-1185">Reference proteome</keyword>
<keyword id="KW-0723">Serine/threonine-protein kinase</keyword>
<keyword id="KW-0808">Transferase</keyword>
<name>M3K18_ARATH</name>
<gene>
    <name evidence="8" type="primary">MAPKKK18</name>
    <name evidence="7" type="synonym">MAP3K18</name>
    <name evidence="9" type="ordered locus">At1g05100</name>
    <name evidence="10" type="ORF">T7A14.2</name>
</gene>
<feature type="chain" id="PRO_0000440623" description="Mitogen-activated protein kinase kinase kinase 18">
    <location>
        <begin position="1"/>
        <end position="339"/>
    </location>
</feature>
<feature type="domain" description="Protein kinase" evidence="2">
    <location>
        <begin position="3"/>
        <end position="263"/>
    </location>
</feature>
<feature type="active site" description="Proton acceptor" evidence="2">
    <location>
        <position position="131"/>
    </location>
</feature>
<feature type="binding site" evidence="2">
    <location>
        <begin position="9"/>
        <end position="17"/>
    </location>
    <ligand>
        <name>ATP</name>
        <dbReference type="ChEBI" id="CHEBI:30616"/>
    </ligand>
</feature>
<feature type="binding site" evidence="2">
    <location>
        <position position="32"/>
    </location>
    <ligand>
        <name>ATP</name>
        <dbReference type="ChEBI" id="CHEBI:30616"/>
    </ligand>
</feature>
<feature type="modified residue" description="Phosphoserine" evidence="1">
    <location>
        <position position="301"/>
    </location>
</feature>
<feature type="mutagenesis site" description="Strongly reduced kinase activity and altered subcellular localization outside the nucleus." evidence="5">
    <original>K</original>
    <variation>M</variation>
    <location>
        <position position="32"/>
    </location>
</feature>
<feature type="mutagenesis site" description="In KN; loss of kinase activity but enhanced growth associated with larger leaves, higher weight, increased chlorophyll contents and increased seed numbers. Delayed leaves senescence." evidence="3">
    <original>K</original>
    <variation>R</variation>
    <location>
        <position position="32"/>
    </location>
</feature>
<feature type="mutagenesis site" description="Constitutively active kinase with normal accumulation in the nucleus." evidence="5">
    <original>T</original>
    <variation>E</variation>
    <location>
        <position position="161"/>
    </location>
</feature>
<sequence>MNWTRGKTLGRGSTATVSAATCHESGETLAVKSAEFHRSEFLQREAKILSSLNSPYVIGYRGCEITREPFHNNGEATTYSLLMEYAPYGTLTDVATKNGGFIDEARVVKYTRQILLGLEYIHNSKGIAHCDIKGSNVLVGENGEAKIADFGCAKWVEPEITEPVRGTPAFMAPEAARGERQGKESDIWAVGCTVIEMVTGSQPWIGADFTDPVSVLYRVGYLGELPELPCSLTEQAKDFLGKCLKKEATERWTASQLLNHPFLVNKEPELVTGLVTNSPTSVTDQMFWRSVEEEVSEDRSSWWECHEDERIGVLSWIGHVVVESTWDLDGEDWITVRRN</sequence>
<reference key="1">
    <citation type="journal article" date="2000" name="Nature">
        <title>Sequence and analysis of chromosome 1 of the plant Arabidopsis thaliana.</title>
        <authorList>
            <person name="Theologis A."/>
            <person name="Ecker J.R."/>
            <person name="Palm C.J."/>
            <person name="Federspiel N.A."/>
            <person name="Kaul S."/>
            <person name="White O."/>
            <person name="Alonso J."/>
            <person name="Altafi H."/>
            <person name="Araujo R."/>
            <person name="Bowman C.L."/>
            <person name="Brooks S.Y."/>
            <person name="Buehler E."/>
            <person name="Chan A."/>
            <person name="Chao Q."/>
            <person name="Chen H."/>
            <person name="Cheuk R.F."/>
            <person name="Chin C.W."/>
            <person name="Chung M.K."/>
            <person name="Conn L."/>
            <person name="Conway A.B."/>
            <person name="Conway A.R."/>
            <person name="Creasy T.H."/>
            <person name="Dewar K."/>
            <person name="Dunn P."/>
            <person name="Etgu P."/>
            <person name="Feldblyum T.V."/>
            <person name="Feng J.-D."/>
            <person name="Fong B."/>
            <person name="Fujii C.Y."/>
            <person name="Gill J.E."/>
            <person name="Goldsmith A.D."/>
            <person name="Haas B."/>
            <person name="Hansen N.F."/>
            <person name="Hughes B."/>
            <person name="Huizar L."/>
            <person name="Hunter J.L."/>
            <person name="Jenkins J."/>
            <person name="Johnson-Hopson C."/>
            <person name="Khan S."/>
            <person name="Khaykin E."/>
            <person name="Kim C.J."/>
            <person name="Koo H.L."/>
            <person name="Kremenetskaia I."/>
            <person name="Kurtz D.B."/>
            <person name="Kwan A."/>
            <person name="Lam B."/>
            <person name="Langin-Hooper S."/>
            <person name="Lee A."/>
            <person name="Lee J.M."/>
            <person name="Lenz C.A."/>
            <person name="Li J.H."/>
            <person name="Li Y.-P."/>
            <person name="Lin X."/>
            <person name="Liu S.X."/>
            <person name="Liu Z.A."/>
            <person name="Luros J.S."/>
            <person name="Maiti R."/>
            <person name="Marziali A."/>
            <person name="Militscher J."/>
            <person name="Miranda M."/>
            <person name="Nguyen M."/>
            <person name="Nierman W.C."/>
            <person name="Osborne B.I."/>
            <person name="Pai G."/>
            <person name="Peterson J."/>
            <person name="Pham P.K."/>
            <person name="Rizzo M."/>
            <person name="Rooney T."/>
            <person name="Rowley D."/>
            <person name="Sakano H."/>
            <person name="Salzberg S.L."/>
            <person name="Schwartz J.R."/>
            <person name="Shinn P."/>
            <person name="Southwick A.M."/>
            <person name="Sun H."/>
            <person name="Tallon L.J."/>
            <person name="Tambunga G."/>
            <person name="Toriumi M.J."/>
            <person name="Town C.D."/>
            <person name="Utterback T."/>
            <person name="Van Aken S."/>
            <person name="Vaysberg M."/>
            <person name="Vysotskaia V.S."/>
            <person name="Walker M."/>
            <person name="Wu D."/>
            <person name="Yu G."/>
            <person name="Fraser C.M."/>
            <person name="Venter J.C."/>
            <person name="Davis R.W."/>
        </authorList>
    </citation>
    <scope>NUCLEOTIDE SEQUENCE [LARGE SCALE GENOMIC DNA]</scope>
    <source>
        <strain>cv. Columbia</strain>
    </source>
</reference>
<reference key="2">
    <citation type="journal article" date="2017" name="Plant J.">
        <title>Araport11: a complete reannotation of the Arabidopsis thaliana reference genome.</title>
        <authorList>
            <person name="Cheng C.Y."/>
            <person name="Krishnakumar V."/>
            <person name="Chan A.P."/>
            <person name="Thibaud-Nissen F."/>
            <person name="Schobel S."/>
            <person name="Town C.D."/>
        </authorList>
    </citation>
    <scope>GENOME REANNOTATION</scope>
    <source>
        <strain>cv. Columbia</strain>
    </source>
</reference>
<reference key="3">
    <citation type="journal article" date="2003" name="Science">
        <title>Empirical analysis of transcriptional activity in the Arabidopsis genome.</title>
        <authorList>
            <person name="Yamada K."/>
            <person name="Lim J."/>
            <person name="Dale J.M."/>
            <person name="Chen H."/>
            <person name="Shinn P."/>
            <person name="Palm C.J."/>
            <person name="Southwick A.M."/>
            <person name="Wu H.C."/>
            <person name="Kim C.J."/>
            <person name="Nguyen M."/>
            <person name="Pham P.K."/>
            <person name="Cheuk R.F."/>
            <person name="Karlin-Newmann G."/>
            <person name="Liu S.X."/>
            <person name="Lam B."/>
            <person name="Sakano H."/>
            <person name="Wu T."/>
            <person name="Yu G."/>
            <person name="Miranda M."/>
            <person name="Quach H.L."/>
            <person name="Tripp M."/>
            <person name="Chang C.H."/>
            <person name="Lee J.M."/>
            <person name="Toriumi M.J."/>
            <person name="Chan M.M."/>
            <person name="Tang C.C."/>
            <person name="Onodera C.S."/>
            <person name="Deng J.M."/>
            <person name="Akiyama K."/>
            <person name="Ansari Y."/>
            <person name="Arakawa T."/>
            <person name="Banh J."/>
            <person name="Banno F."/>
            <person name="Bowser L."/>
            <person name="Brooks S.Y."/>
            <person name="Carninci P."/>
            <person name="Chao Q."/>
            <person name="Choy N."/>
            <person name="Enju A."/>
            <person name="Goldsmith A.D."/>
            <person name="Gurjal M."/>
            <person name="Hansen N.F."/>
            <person name="Hayashizaki Y."/>
            <person name="Johnson-Hopson C."/>
            <person name="Hsuan V.W."/>
            <person name="Iida K."/>
            <person name="Karnes M."/>
            <person name="Khan S."/>
            <person name="Koesema E."/>
            <person name="Ishida J."/>
            <person name="Jiang P.X."/>
            <person name="Jones T."/>
            <person name="Kawai J."/>
            <person name="Kamiya A."/>
            <person name="Meyers C."/>
            <person name="Nakajima M."/>
            <person name="Narusaka M."/>
            <person name="Seki M."/>
            <person name="Sakurai T."/>
            <person name="Satou M."/>
            <person name="Tamse R."/>
            <person name="Vaysberg M."/>
            <person name="Wallender E.K."/>
            <person name="Wong C."/>
            <person name="Yamamura Y."/>
            <person name="Yuan S."/>
            <person name="Shinozaki K."/>
            <person name="Davis R.W."/>
            <person name="Theologis A."/>
            <person name="Ecker J.R."/>
        </authorList>
    </citation>
    <scope>NUCLEOTIDE SEQUENCE [LARGE SCALE MRNA]</scope>
    <source>
        <strain>cv. Columbia</strain>
    </source>
</reference>
<reference key="4">
    <citation type="journal article" date="2015" name="Plant Cell Physiol.">
        <title>Arabidopsis ABA-activated kinase MAPKKK18 is regulated by protein phosphatase 2C ABI1 and the ubiquitin-proteasome pathway.</title>
        <authorList>
            <person name="Mitula F."/>
            <person name="Tajdel M."/>
            <person name="Ciesla A."/>
            <person name="Kasprowicz-Maluski A."/>
            <person name="Kulik A."/>
            <person name="Babula-Skowronska D."/>
            <person name="Michalak M."/>
            <person name="Dobrowolska G."/>
            <person name="Sadowski J."/>
            <person name="Ludwikow A."/>
        </authorList>
    </citation>
    <scope>FUNCTION</scope>
    <scope>DISRUPTION PHENOTYPE</scope>
    <scope>MUTAGENESIS OF LYS-32 AND THR-161</scope>
    <scope>CATALYTIC ACTIVITY</scope>
    <scope>ACTIVITY REGULATION</scope>
    <scope>SUBCELLULAR LOCATION</scope>
    <scope>INTERACTION WITH ABI1</scope>
    <scope>REGULATION BY THE PROTEASOME</scope>
    <scope>INDUCTION BY ABSCISIC ACID</scope>
    <scope>DEVELOPMENTAL STAGE</scope>
    <scope>TISSUE SPECIFICITY</scope>
    <source>
        <strain>cv. Columbia</strain>
    </source>
</reference>
<reference key="5">
    <citation type="journal article" date="2015" name="Plant J.">
        <title>Identification and characterization of an ABA-activated MAP kinase cascade in Arabidopsis thaliana.</title>
        <authorList>
            <person name="Danquah A."/>
            <person name="de Zelicourt A."/>
            <person name="Boudsocq M."/>
            <person name="Neubauer J."/>
            <person name="Frei Dit Frey N."/>
            <person name="Leonhardt N."/>
            <person name="Pateyron S."/>
            <person name="Gwinner F."/>
            <person name="Tamby J.P."/>
            <person name="Ortiz-Masia D."/>
            <person name="Marcote M.J."/>
            <person name="Hirt H."/>
            <person name="Colcombet J."/>
        </authorList>
    </citation>
    <scope>FUNCTION</scope>
    <scope>DISRUPTION PHENOTYPE</scope>
    <scope>INDUCTION BY ABSCISIC ACID AND OSMOTIC STRESSES</scope>
    <scope>INTERACTION WITH MKK3</scope>
    <source>
        <strain>cv. Columbia</strain>
    </source>
</reference>
<reference key="6">
    <citation type="journal article" date="2015" name="Plant Mol. Biol.">
        <title>An abscisic acid inducible Arabidopsis MAPKKK, MAPKKK18 regulates leaf senescence via its kinase activity.</title>
        <authorList>
            <person name="Matsuoka D."/>
            <person name="Yasufuku T."/>
            <person name="Furuya T."/>
            <person name="Nanmori T."/>
        </authorList>
    </citation>
    <scope>FUNCTION</scope>
    <scope>MUTAGENESIS OF LYS-32</scope>
    <scope>INDUCTION BY ABSCISIC ACID</scope>
    <scope>INTERACTION WITH MKK3</scope>
    <scope>CATALYTIC ACTIVITY</scope>
    <scope>ACTIVITY REGULATION</scope>
    <scope>AUTOPHOSPHORYLATION</scope>
    <source>
        <strain>cv. Columbia</strain>
    </source>
</reference>
<reference key="7">
    <citation type="journal article" date="2016" name="Plant Signal. Behav.">
        <title>Regulation of Arabidopsis MAPKKK18 by ABI1 and SnRK2, components of the ABA signaling pathway.</title>
        <authorList>
            <person name="Tajdel M."/>
            <person name="Mitula F."/>
            <person name="Ludwikow A."/>
        </authorList>
    </citation>
    <scope>INTERACTION WITH SRK2E</scope>
    <scope>SUBCELLULAR LOCATION</scope>
</reference>
<reference key="8">
    <citation type="journal article" date="2018" name="Front. Plant Sci.">
        <title>Mitogen-activated protein kinase cascades in plant hormone signaling.</title>
        <authorList>
            <person name="Jagodzik P."/>
            <person name="Tajdel-Zielinska M."/>
            <person name="Ciesla A."/>
            <person name="Marczak M."/>
            <person name="Ludwikow A."/>
        </authorList>
    </citation>
    <scope>REVIEW ON MITOGEN-ACTIVATED PROTEIN KINASE CASCADES</scope>
</reference>
<dbReference type="EC" id="2.7.11.25" evidence="2 3 5"/>
<dbReference type="EMBL" id="AC005322">
    <property type="protein sequence ID" value="AAC97990.1"/>
    <property type="molecule type" value="Genomic_DNA"/>
</dbReference>
<dbReference type="EMBL" id="CP002684">
    <property type="protein sequence ID" value="AEE27791.1"/>
    <property type="molecule type" value="Genomic_DNA"/>
</dbReference>
<dbReference type="EMBL" id="AY064039">
    <property type="protein sequence ID" value="AAL36395.1"/>
    <property type="molecule type" value="mRNA"/>
</dbReference>
<dbReference type="EMBL" id="AY091011">
    <property type="protein sequence ID" value="AAM14033.1"/>
    <property type="molecule type" value="mRNA"/>
</dbReference>
<dbReference type="EMBL" id="BT004419">
    <property type="protein sequence ID" value="AAO42413.1"/>
    <property type="molecule type" value="mRNA"/>
</dbReference>
<dbReference type="PIR" id="C86185">
    <property type="entry name" value="C86185"/>
</dbReference>
<dbReference type="RefSeq" id="NP_172003.1">
    <property type="nucleotide sequence ID" value="NM_100389.4"/>
</dbReference>
<dbReference type="SMR" id="Q9ZVP5"/>
<dbReference type="FunCoup" id="Q9ZVP5">
    <property type="interactions" value="475"/>
</dbReference>
<dbReference type="STRING" id="3702.Q9ZVP5"/>
<dbReference type="PaxDb" id="3702-AT1G05100.1"/>
<dbReference type="ProteomicsDB" id="238649"/>
<dbReference type="EnsemblPlants" id="AT1G05100.1">
    <property type="protein sequence ID" value="AT1G05100.1"/>
    <property type="gene ID" value="AT1G05100"/>
</dbReference>
<dbReference type="GeneID" id="839324"/>
<dbReference type="Gramene" id="AT1G05100.1">
    <property type="protein sequence ID" value="AT1G05100.1"/>
    <property type="gene ID" value="AT1G05100"/>
</dbReference>
<dbReference type="KEGG" id="ath:AT1G05100"/>
<dbReference type="Araport" id="AT1G05100"/>
<dbReference type="TAIR" id="AT1G05100">
    <property type="gene designation" value="MAPKKK18"/>
</dbReference>
<dbReference type="eggNOG" id="KOG0198">
    <property type="taxonomic scope" value="Eukaryota"/>
</dbReference>
<dbReference type="HOGENOM" id="CLU_000288_63_23_1"/>
<dbReference type="InParanoid" id="Q9ZVP5"/>
<dbReference type="OMA" id="MDGEDWI"/>
<dbReference type="PhylomeDB" id="Q9ZVP5"/>
<dbReference type="PRO" id="PR:Q9ZVP5"/>
<dbReference type="Proteomes" id="UP000006548">
    <property type="component" value="Chromosome 1"/>
</dbReference>
<dbReference type="ExpressionAtlas" id="Q9ZVP5">
    <property type="expression patterns" value="baseline and differential"/>
</dbReference>
<dbReference type="GO" id="GO:0005634">
    <property type="term" value="C:nucleus"/>
    <property type="evidence" value="ECO:0000314"/>
    <property type="project" value="UniProtKB"/>
</dbReference>
<dbReference type="GO" id="GO:0005524">
    <property type="term" value="F:ATP binding"/>
    <property type="evidence" value="ECO:0007669"/>
    <property type="project" value="UniProtKB-KW"/>
</dbReference>
<dbReference type="GO" id="GO:0004709">
    <property type="term" value="F:MAP kinase kinase kinase activity"/>
    <property type="evidence" value="ECO:0007669"/>
    <property type="project" value="UniProtKB-EC"/>
</dbReference>
<dbReference type="GO" id="GO:0004672">
    <property type="term" value="F:protein kinase activity"/>
    <property type="evidence" value="ECO:0000314"/>
    <property type="project" value="UniProtKB"/>
</dbReference>
<dbReference type="GO" id="GO:0019901">
    <property type="term" value="F:protein kinase binding"/>
    <property type="evidence" value="ECO:0000353"/>
    <property type="project" value="TAIR"/>
</dbReference>
<dbReference type="GO" id="GO:0106310">
    <property type="term" value="F:protein serine kinase activity"/>
    <property type="evidence" value="ECO:0007669"/>
    <property type="project" value="RHEA"/>
</dbReference>
<dbReference type="GO" id="GO:0004674">
    <property type="term" value="F:protein serine/threonine kinase activity"/>
    <property type="evidence" value="ECO:0000314"/>
    <property type="project" value="UniProtKB"/>
</dbReference>
<dbReference type="GO" id="GO:0009738">
    <property type="term" value="P:abscisic acid-activated signaling pathway"/>
    <property type="evidence" value="ECO:0000315"/>
    <property type="project" value="UniProtKB"/>
</dbReference>
<dbReference type="GO" id="GO:1902457">
    <property type="term" value="P:negative regulation of stomatal opening"/>
    <property type="evidence" value="ECO:0000315"/>
    <property type="project" value="UniProtKB"/>
</dbReference>
<dbReference type="GO" id="GO:0009789">
    <property type="term" value="P:positive regulation of abscisic acid-activated signaling pathway"/>
    <property type="evidence" value="ECO:0000315"/>
    <property type="project" value="UniProtKB"/>
</dbReference>
<dbReference type="GO" id="GO:1900057">
    <property type="term" value="P:positive regulation of leaf senescence"/>
    <property type="evidence" value="ECO:0000315"/>
    <property type="project" value="UniProtKB"/>
</dbReference>
<dbReference type="GO" id="GO:0046777">
    <property type="term" value="P:protein autophosphorylation"/>
    <property type="evidence" value="ECO:0000314"/>
    <property type="project" value="UniProtKB"/>
</dbReference>
<dbReference type="GO" id="GO:2000038">
    <property type="term" value="P:regulation of stomatal complex development"/>
    <property type="evidence" value="ECO:0000315"/>
    <property type="project" value="UniProtKB"/>
</dbReference>
<dbReference type="GO" id="GO:0009737">
    <property type="term" value="P:response to abscisic acid"/>
    <property type="evidence" value="ECO:0000314"/>
    <property type="project" value="UniProtKB"/>
</dbReference>
<dbReference type="GO" id="GO:0006970">
    <property type="term" value="P:response to osmotic stress"/>
    <property type="evidence" value="ECO:0000270"/>
    <property type="project" value="UniProtKB"/>
</dbReference>
<dbReference type="GO" id="GO:0007165">
    <property type="term" value="P:signal transduction"/>
    <property type="evidence" value="ECO:0000314"/>
    <property type="project" value="UniProtKB"/>
</dbReference>
<dbReference type="CDD" id="cd06606">
    <property type="entry name" value="STKc_MAPKKK"/>
    <property type="match status" value="1"/>
</dbReference>
<dbReference type="FunFam" id="1.10.510.10:FF:000852">
    <property type="entry name" value="Mitogen-activated protein kinase kinase kinase 17"/>
    <property type="match status" value="1"/>
</dbReference>
<dbReference type="Gene3D" id="1.10.510.10">
    <property type="entry name" value="Transferase(Phosphotransferase) domain 1"/>
    <property type="match status" value="1"/>
</dbReference>
<dbReference type="InterPro" id="IPR011009">
    <property type="entry name" value="Kinase-like_dom_sf"/>
</dbReference>
<dbReference type="InterPro" id="IPR052751">
    <property type="entry name" value="Plant_MAPKKK"/>
</dbReference>
<dbReference type="InterPro" id="IPR000719">
    <property type="entry name" value="Prot_kinase_dom"/>
</dbReference>
<dbReference type="InterPro" id="IPR017441">
    <property type="entry name" value="Protein_kinase_ATP_BS"/>
</dbReference>
<dbReference type="InterPro" id="IPR008271">
    <property type="entry name" value="Ser/Thr_kinase_AS"/>
</dbReference>
<dbReference type="PANTHER" id="PTHR48011">
    <property type="entry name" value="CCR4-NOT TRANSCRIPTIONAL COMPLEX SUBUNIT CAF120-RELATED"/>
    <property type="match status" value="1"/>
</dbReference>
<dbReference type="PANTHER" id="PTHR48011:SF4">
    <property type="entry name" value="MITOGEN-ACTIVATED PROTEIN KINASE KINASE KINASE 19"/>
    <property type="match status" value="1"/>
</dbReference>
<dbReference type="Pfam" id="PF00069">
    <property type="entry name" value="Pkinase"/>
    <property type="match status" value="1"/>
</dbReference>
<dbReference type="SMART" id="SM00220">
    <property type="entry name" value="S_TKc"/>
    <property type="match status" value="1"/>
</dbReference>
<dbReference type="SUPFAM" id="SSF56112">
    <property type="entry name" value="Protein kinase-like (PK-like)"/>
    <property type="match status" value="1"/>
</dbReference>
<dbReference type="PROSITE" id="PS00107">
    <property type="entry name" value="PROTEIN_KINASE_ATP"/>
    <property type="match status" value="1"/>
</dbReference>
<dbReference type="PROSITE" id="PS50011">
    <property type="entry name" value="PROTEIN_KINASE_DOM"/>
    <property type="match status" value="1"/>
</dbReference>
<dbReference type="PROSITE" id="PS00108">
    <property type="entry name" value="PROTEIN_KINASE_ST"/>
    <property type="match status" value="1"/>
</dbReference>
<evidence type="ECO:0000250" key="1">
    <source>
        <dbReference type="UniProtKB" id="O23304"/>
    </source>
</evidence>
<evidence type="ECO:0000255" key="2">
    <source>
        <dbReference type="PROSITE-ProRule" id="PRU00159"/>
    </source>
</evidence>
<evidence type="ECO:0000269" key="3">
    <source>
    </source>
</evidence>
<evidence type="ECO:0000269" key="4">
    <source>
    </source>
</evidence>
<evidence type="ECO:0000269" key="5">
    <source>
    </source>
</evidence>
<evidence type="ECO:0000269" key="6">
    <source>
    </source>
</evidence>
<evidence type="ECO:0000303" key="7">
    <source>
    </source>
</evidence>
<evidence type="ECO:0000303" key="8">
    <source>
    </source>
</evidence>
<evidence type="ECO:0000312" key="9">
    <source>
        <dbReference type="Araport" id="AT1G05100"/>
    </source>
</evidence>
<evidence type="ECO:0000312" key="10">
    <source>
        <dbReference type="EMBL" id="AAC97990.1"/>
    </source>
</evidence>
<organism>
    <name type="scientific">Arabidopsis thaliana</name>
    <name type="common">Mouse-ear cress</name>
    <dbReference type="NCBI Taxonomy" id="3702"/>
    <lineage>
        <taxon>Eukaryota</taxon>
        <taxon>Viridiplantae</taxon>
        <taxon>Streptophyta</taxon>
        <taxon>Embryophyta</taxon>
        <taxon>Tracheophyta</taxon>
        <taxon>Spermatophyta</taxon>
        <taxon>Magnoliopsida</taxon>
        <taxon>eudicotyledons</taxon>
        <taxon>Gunneridae</taxon>
        <taxon>Pentapetalae</taxon>
        <taxon>rosids</taxon>
        <taxon>malvids</taxon>
        <taxon>Brassicales</taxon>
        <taxon>Brassicaceae</taxon>
        <taxon>Camelineae</taxon>
        <taxon>Arabidopsis</taxon>
    </lineage>
</organism>
<proteinExistence type="evidence at protein level"/>